<protein>
    <recommendedName>
        <fullName evidence="1">Cell division protein FtsB</fullName>
    </recommendedName>
</protein>
<gene>
    <name evidence="1" type="primary">ftsB</name>
    <name type="ordered locus">XfasM23_0569</name>
</gene>
<evidence type="ECO:0000255" key="1">
    <source>
        <dbReference type="HAMAP-Rule" id="MF_00599"/>
    </source>
</evidence>
<evidence type="ECO:0000256" key="2">
    <source>
        <dbReference type="SAM" id="MobiDB-lite"/>
    </source>
</evidence>
<accession>B2I938</accession>
<name>FTSB_XYLF2</name>
<organism>
    <name type="scientific">Xylella fastidiosa (strain M23)</name>
    <dbReference type="NCBI Taxonomy" id="405441"/>
    <lineage>
        <taxon>Bacteria</taxon>
        <taxon>Pseudomonadati</taxon>
        <taxon>Pseudomonadota</taxon>
        <taxon>Gammaproteobacteria</taxon>
        <taxon>Lysobacterales</taxon>
        <taxon>Lysobacteraceae</taxon>
        <taxon>Xylella</taxon>
    </lineage>
</organism>
<sequence>MRNWRWLLLVLAALLAWLQHRFWFGPGNSGEVRMLQVQIVQQHQENERLRQRNASLAAEVKNLKDGDAAIEERARSELGMIKPGEIFYRVVEDIPVPLPNDTSADHGVDLSQPRREKR</sequence>
<proteinExistence type="inferred from homology"/>
<feature type="chain" id="PRO_1000129951" description="Cell division protein FtsB">
    <location>
        <begin position="1"/>
        <end position="118"/>
    </location>
</feature>
<feature type="topological domain" description="Cytoplasmic" evidence="1">
    <location>
        <begin position="1"/>
        <end position="6"/>
    </location>
</feature>
<feature type="transmembrane region" description="Helical" evidence="1">
    <location>
        <begin position="7"/>
        <end position="24"/>
    </location>
</feature>
<feature type="topological domain" description="Periplasmic" evidence="1">
    <location>
        <begin position="25"/>
        <end position="118"/>
    </location>
</feature>
<feature type="region of interest" description="Disordered" evidence="2">
    <location>
        <begin position="98"/>
        <end position="118"/>
    </location>
</feature>
<feature type="coiled-coil region" evidence="1">
    <location>
        <begin position="30"/>
        <end position="66"/>
    </location>
</feature>
<feature type="compositionally biased region" description="Basic and acidic residues" evidence="2">
    <location>
        <begin position="103"/>
        <end position="118"/>
    </location>
</feature>
<dbReference type="EMBL" id="CP001011">
    <property type="protein sequence ID" value="ACB92013.1"/>
    <property type="molecule type" value="Genomic_DNA"/>
</dbReference>
<dbReference type="RefSeq" id="WP_011097688.1">
    <property type="nucleotide sequence ID" value="NC_010577.1"/>
</dbReference>
<dbReference type="SMR" id="B2I938"/>
<dbReference type="GeneID" id="93904255"/>
<dbReference type="KEGG" id="xfn:XfasM23_0569"/>
<dbReference type="HOGENOM" id="CLU_134863_5_1_6"/>
<dbReference type="Proteomes" id="UP000001698">
    <property type="component" value="Chromosome"/>
</dbReference>
<dbReference type="GO" id="GO:0032153">
    <property type="term" value="C:cell division site"/>
    <property type="evidence" value="ECO:0007669"/>
    <property type="project" value="UniProtKB-UniRule"/>
</dbReference>
<dbReference type="GO" id="GO:0030428">
    <property type="term" value="C:cell septum"/>
    <property type="evidence" value="ECO:0007669"/>
    <property type="project" value="TreeGrafter"/>
</dbReference>
<dbReference type="GO" id="GO:0005886">
    <property type="term" value="C:plasma membrane"/>
    <property type="evidence" value="ECO:0007669"/>
    <property type="project" value="UniProtKB-SubCell"/>
</dbReference>
<dbReference type="GO" id="GO:0043093">
    <property type="term" value="P:FtsZ-dependent cytokinesis"/>
    <property type="evidence" value="ECO:0007669"/>
    <property type="project" value="UniProtKB-UniRule"/>
</dbReference>
<dbReference type="HAMAP" id="MF_00599">
    <property type="entry name" value="FtsB"/>
    <property type="match status" value="1"/>
</dbReference>
<dbReference type="InterPro" id="IPR023081">
    <property type="entry name" value="Cell_div_FtsB"/>
</dbReference>
<dbReference type="InterPro" id="IPR007060">
    <property type="entry name" value="FtsL/DivIC"/>
</dbReference>
<dbReference type="NCBIfam" id="NF002058">
    <property type="entry name" value="PRK00888.1"/>
    <property type="match status" value="1"/>
</dbReference>
<dbReference type="PANTHER" id="PTHR37485">
    <property type="entry name" value="CELL DIVISION PROTEIN FTSB"/>
    <property type="match status" value="1"/>
</dbReference>
<dbReference type="PANTHER" id="PTHR37485:SF1">
    <property type="entry name" value="CELL DIVISION PROTEIN FTSB"/>
    <property type="match status" value="1"/>
</dbReference>
<dbReference type="Pfam" id="PF04977">
    <property type="entry name" value="DivIC"/>
    <property type="match status" value="1"/>
</dbReference>
<comment type="function">
    <text evidence="1">Essential cell division protein. May link together the upstream cell division proteins, which are predominantly cytoplasmic, with the downstream cell division proteins, which are predominantly periplasmic.</text>
</comment>
<comment type="subunit">
    <text evidence="1">Part of a complex composed of FtsB, FtsL and FtsQ.</text>
</comment>
<comment type="subcellular location">
    <subcellularLocation>
        <location evidence="1">Cell inner membrane</location>
        <topology evidence="1">Single-pass type II membrane protein</topology>
    </subcellularLocation>
    <text evidence="1">Localizes to the division septum.</text>
</comment>
<comment type="similarity">
    <text evidence="1">Belongs to the FtsB family.</text>
</comment>
<reference key="1">
    <citation type="journal article" date="2010" name="J. Bacteriol.">
        <title>Whole genome sequences of two Xylella fastidiosa strains (M12 and M23) causing almond leaf scorch disease in California.</title>
        <authorList>
            <person name="Chen J."/>
            <person name="Xie G."/>
            <person name="Han S."/>
            <person name="Chertkov O."/>
            <person name="Sims D."/>
            <person name="Civerolo E.L."/>
        </authorList>
    </citation>
    <scope>NUCLEOTIDE SEQUENCE [LARGE SCALE GENOMIC DNA]</scope>
    <source>
        <strain>M23</strain>
    </source>
</reference>
<keyword id="KW-0131">Cell cycle</keyword>
<keyword id="KW-0132">Cell division</keyword>
<keyword id="KW-0997">Cell inner membrane</keyword>
<keyword id="KW-1003">Cell membrane</keyword>
<keyword id="KW-0175">Coiled coil</keyword>
<keyword id="KW-0472">Membrane</keyword>
<keyword id="KW-0812">Transmembrane</keyword>
<keyword id="KW-1133">Transmembrane helix</keyword>